<gene>
    <name type="primary">ND3</name>
</gene>
<comment type="function">
    <text evidence="1">Core subunit of the mitochondrial membrane respiratory chain NADH dehydrogenase (Complex I) that is believed to belong to the minimal assembly required for catalysis. Complex I functions in the transfer of electrons from NADH to the respiratory chain. The immediate electron acceptor for the enzyme is believed to be ubiquinone (By similarity).</text>
</comment>
<comment type="catalytic activity">
    <reaction>
        <text>a ubiquinone + NADH + 5 H(+)(in) = a ubiquinol + NAD(+) + 4 H(+)(out)</text>
        <dbReference type="Rhea" id="RHEA:29091"/>
        <dbReference type="Rhea" id="RHEA-COMP:9565"/>
        <dbReference type="Rhea" id="RHEA-COMP:9566"/>
        <dbReference type="ChEBI" id="CHEBI:15378"/>
        <dbReference type="ChEBI" id="CHEBI:16389"/>
        <dbReference type="ChEBI" id="CHEBI:17976"/>
        <dbReference type="ChEBI" id="CHEBI:57540"/>
        <dbReference type="ChEBI" id="CHEBI:57945"/>
        <dbReference type="EC" id="7.1.1.2"/>
    </reaction>
</comment>
<comment type="subcellular location">
    <subcellularLocation>
        <location evidence="1">Mitochondrion membrane</location>
        <topology evidence="1">Multi-pass membrane protein</topology>
    </subcellularLocation>
</comment>
<comment type="similarity">
    <text evidence="3">Belongs to the complex I subunit 3 family.</text>
</comment>
<reference key="1">
    <citation type="journal article" date="1995" name="Genetics">
        <title>Complete sequence of the mitochondrial DNA of the annelid worm Lumbricus terrestris.</title>
        <authorList>
            <person name="Boore J.L."/>
            <person name="Brown W.M."/>
        </authorList>
    </citation>
    <scope>NUCLEOTIDE SEQUENCE [GENOMIC DNA]</scope>
</reference>
<proteinExistence type="inferred from homology"/>
<keyword id="KW-0249">Electron transport</keyword>
<keyword id="KW-0472">Membrane</keyword>
<keyword id="KW-0496">Mitochondrion</keyword>
<keyword id="KW-0520">NAD</keyword>
<keyword id="KW-0679">Respiratory chain</keyword>
<keyword id="KW-1278">Translocase</keyword>
<keyword id="KW-0812">Transmembrane</keyword>
<keyword id="KW-1133">Transmembrane helix</keyword>
<keyword id="KW-0813">Transport</keyword>
<keyword id="KW-0830">Ubiquinone</keyword>
<sequence>MILTALSSAIALLVPIIILGAAWVLASRSTEDREKSSPFECGFDPKSTARIPFSTRFFLLAIIFIVFDIEIVLLMPLPTILHTSDVFTTVTTSVLFLMILLIGLIHEWKEGSLDWSS</sequence>
<evidence type="ECO:0000250" key="1"/>
<evidence type="ECO:0000255" key="2"/>
<evidence type="ECO:0000305" key="3"/>
<name>NU3M_LUMTE</name>
<protein>
    <recommendedName>
        <fullName>NADH-ubiquinone oxidoreductase chain 3</fullName>
        <ecNumber>7.1.1.2</ecNumber>
    </recommendedName>
    <alternativeName>
        <fullName>NADH dehydrogenase subunit 3</fullName>
    </alternativeName>
</protein>
<geneLocation type="mitochondrion"/>
<accession>Q34950</accession>
<feature type="chain" id="PRO_0000117759" description="NADH-ubiquinone oxidoreductase chain 3">
    <location>
        <begin position="1"/>
        <end position="117"/>
    </location>
</feature>
<feature type="transmembrane region" description="Helical" evidence="2">
    <location>
        <begin position="5"/>
        <end position="25"/>
    </location>
</feature>
<feature type="transmembrane region" description="Helical" evidence="2">
    <location>
        <begin position="57"/>
        <end position="77"/>
    </location>
</feature>
<feature type="transmembrane region" description="Helical" evidence="2">
    <location>
        <begin position="86"/>
        <end position="106"/>
    </location>
</feature>
<dbReference type="EC" id="7.1.1.2"/>
<dbReference type="EMBL" id="U24570">
    <property type="protein sequence ID" value="AAC46875.1"/>
    <property type="molecule type" value="Genomic_DNA"/>
</dbReference>
<dbReference type="PIR" id="S58996">
    <property type="entry name" value="S58996"/>
</dbReference>
<dbReference type="RefSeq" id="NP_008249.1">
    <property type="nucleotide sequence ID" value="NC_001673.1"/>
</dbReference>
<dbReference type="SMR" id="Q34950"/>
<dbReference type="GeneID" id="807924"/>
<dbReference type="CTD" id="4537"/>
<dbReference type="GO" id="GO:0031966">
    <property type="term" value="C:mitochondrial membrane"/>
    <property type="evidence" value="ECO:0007669"/>
    <property type="project" value="UniProtKB-SubCell"/>
</dbReference>
<dbReference type="GO" id="GO:0030964">
    <property type="term" value="C:NADH dehydrogenase complex"/>
    <property type="evidence" value="ECO:0007669"/>
    <property type="project" value="TreeGrafter"/>
</dbReference>
<dbReference type="GO" id="GO:0008137">
    <property type="term" value="F:NADH dehydrogenase (ubiquinone) activity"/>
    <property type="evidence" value="ECO:0007669"/>
    <property type="project" value="UniProtKB-EC"/>
</dbReference>
<dbReference type="Gene3D" id="1.20.58.1610">
    <property type="entry name" value="NADH:ubiquinone/plastoquinone oxidoreductase, chain 3"/>
    <property type="match status" value="1"/>
</dbReference>
<dbReference type="InterPro" id="IPR000440">
    <property type="entry name" value="NADH_UbQ/plastoQ_OxRdtase_su3"/>
</dbReference>
<dbReference type="InterPro" id="IPR038430">
    <property type="entry name" value="NDAH_ubi_oxred_su3_sf"/>
</dbReference>
<dbReference type="PANTHER" id="PTHR11058">
    <property type="entry name" value="NADH-UBIQUINONE OXIDOREDUCTASE CHAIN 3"/>
    <property type="match status" value="1"/>
</dbReference>
<dbReference type="PANTHER" id="PTHR11058:SF9">
    <property type="entry name" value="NADH-UBIQUINONE OXIDOREDUCTASE CHAIN 3"/>
    <property type="match status" value="1"/>
</dbReference>
<dbReference type="Pfam" id="PF00507">
    <property type="entry name" value="Oxidored_q4"/>
    <property type="match status" value="1"/>
</dbReference>
<organism>
    <name type="scientific">Lumbricus terrestris</name>
    <name type="common">Common earthworm</name>
    <dbReference type="NCBI Taxonomy" id="6398"/>
    <lineage>
        <taxon>Eukaryota</taxon>
        <taxon>Metazoa</taxon>
        <taxon>Spiralia</taxon>
        <taxon>Lophotrochozoa</taxon>
        <taxon>Annelida</taxon>
        <taxon>Clitellata</taxon>
        <taxon>Oligochaeta</taxon>
        <taxon>Crassiclitellata</taxon>
        <taxon>Lumbricina</taxon>
        <taxon>Lumbricidae</taxon>
        <taxon>Lumbricinae</taxon>
        <taxon>Lumbricus</taxon>
    </lineage>
</organism>